<sequence>MHAERRSGPVELLGLDRPRLAAFFDTLGEKRFRARQIMQWLHQRHVYDFDEMTDLSKALRQRLREHARVGLPEVAADQQASDGTRKWVVRLADGNCVEAVYIPEPKRGTLCISSQAGCPMGCTFCATGEGGFSRNLTAAEIVGQVHVARQHLPEGAITNIVFMGMGEPLLNFDPVISASRVFTDDYGFVLSKRRVTISTSGVVHAIERMQRVTDVSLAVSLHAPNNELRNQLVPLNRKNPLERLLPACHAYIAEKPHRRITWEYVMLDGVNDQDEHARELLQRLRGIPSKVNLIPFNPYPGARYGRTPDRQVRRFADRLLEHGLTATIRETRGDDIDGACGQLVGEIRDARASKVARPA</sequence>
<reference key="1">
    <citation type="submission" date="2006-12" db="EMBL/GenBank/DDBJ databases">
        <title>Complete sequence of Halorhodospira halophila SL1.</title>
        <authorList>
            <consortium name="US DOE Joint Genome Institute"/>
            <person name="Copeland A."/>
            <person name="Lucas S."/>
            <person name="Lapidus A."/>
            <person name="Barry K."/>
            <person name="Detter J.C."/>
            <person name="Glavina del Rio T."/>
            <person name="Hammon N."/>
            <person name="Israni S."/>
            <person name="Dalin E."/>
            <person name="Tice H."/>
            <person name="Pitluck S."/>
            <person name="Saunders E."/>
            <person name="Brettin T."/>
            <person name="Bruce D."/>
            <person name="Han C."/>
            <person name="Tapia R."/>
            <person name="Schmutz J."/>
            <person name="Larimer F."/>
            <person name="Land M."/>
            <person name="Hauser L."/>
            <person name="Kyrpides N."/>
            <person name="Mikhailova N."/>
            <person name="Hoff W."/>
            <person name="Richardson P."/>
        </authorList>
    </citation>
    <scope>NUCLEOTIDE SEQUENCE [LARGE SCALE GENOMIC DNA]</scope>
    <source>
        <strain>DSM 244 / SL1</strain>
    </source>
</reference>
<comment type="function">
    <text evidence="1">Specifically methylates position 2 of adenine 2503 in 23S rRNA and position 2 of adenine 37 in tRNAs. m2A2503 modification seems to play a crucial role in the proofreading step occurring at the peptidyl transferase center and thus would serve to optimize ribosomal fidelity.</text>
</comment>
<comment type="catalytic activity">
    <reaction evidence="1">
        <text>adenosine(2503) in 23S rRNA + 2 reduced [2Fe-2S]-[ferredoxin] + 2 S-adenosyl-L-methionine = 2-methyladenosine(2503) in 23S rRNA + 5'-deoxyadenosine + L-methionine + 2 oxidized [2Fe-2S]-[ferredoxin] + S-adenosyl-L-homocysteine</text>
        <dbReference type="Rhea" id="RHEA:42916"/>
        <dbReference type="Rhea" id="RHEA-COMP:10000"/>
        <dbReference type="Rhea" id="RHEA-COMP:10001"/>
        <dbReference type="Rhea" id="RHEA-COMP:10152"/>
        <dbReference type="Rhea" id="RHEA-COMP:10282"/>
        <dbReference type="ChEBI" id="CHEBI:17319"/>
        <dbReference type="ChEBI" id="CHEBI:33737"/>
        <dbReference type="ChEBI" id="CHEBI:33738"/>
        <dbReference type="ChEBI" id="CHEBI:57844"/>
        <dbReference type="ChEBI" id="CHEBI:57856"/>
        <dbReference type="ChEBI" id="CHEBI:59789"/>
        <dbReference type="ChEBI" id="CHEBI:74411"/>
        <dbReference type="ChEBI" id="CHEBI:74497"/>
        <dbReference type="EC" id="2.1.1.192"/>
    </reaction>
</comment>
<comment type="catalytic activity">
    <reaction evidence="1">
        <text>adenosine(37) in tRNA + 2 reduced [2Fe-2S]-[ferredoxin] + 2 S-adenosyl-L-methionine = 2-methyladenosine(37) in tRNA + 5'-deoxyadenosine + L-methionine + 2 oxidized [2Fe-2S]-[ferredoxin] + S-adenosyl-L-homocysteine</text>
        <dbReference type="Rhea" id="RHEA:43332"/>
        <dbReference type="Rhea" id="RHEA-COMP:10000"/>
        <dbReference type="Rhea" id="RHEA-COMP:10001"/>
        <dbReference type="Rhea" id="RHEA-COMP:10162"/>
        <dbReference type="Rhea" id="RHEA-COMP:10485"/>
        <dbReference type="ChEBI" id="CHEBI:17319"/>
        <dbReference type="ChEBI" id="CHEBI:33737"/>
        <dbReference type="ChEBI" id="CHEBI:33738"/>
        <dbReference type="ChEBI" id="CHEBI:57844"/>
        <dbReference type="ChEBI" id="CHEBI:57856"/>
        <dbReference type="ChEBI" id="CHEBI:59789"/>
        <dbReference type="ChEBI" id="CHEBI:74411"/>
        <dbReference type="ChEBI" id="CHEBI:74497"/>
        <dbReference type="EC" id="2.1.1.192"/>
    </reaction>
</comment>
<comment type="cofactor">
    <cofactor evidence="1">
        <name>[4Fe-4S] cluster</name>
        <dbReference type="ChEBI" id="CHEBI:49883"/>
    </cofactor>
    <text evidence="1">Binds 1 [4Fe-4S] cluster. The cluster is coordinated with 3 cysteines and an exchangeable S-adenosyl-L-methionine.</text>
</comment>
<comment type="subcellular location">
    <subcellularLocation>
        <location evidence="1">Cytoplasm</location>
    </subcellularLocation>
</comment>
<comment type="miscellaneous">
    <text evidence="1">Reaction proceeds by a ping-pong mechanism involving intermediate methylation of a conserved cysteine residue.</text>
</comment>
<comment type="similarity">
    <text evidence="1">Belongs to the radical SAM superfamily. RlmN family.</text>
</comment>
<organism>
    <name type="scientific">Halorhodospira halophila (strain DSM 244 / SL1)</name>
    <name type="common">Ectothiorhodospira halophila (strain DSM 244 / SL1)</name>
    <dbReference type="NCBI Taxonomy" id="349124"/>
    <lineage>
        <taxon>Bacteria</taxon>
        <taxon>Pseudomonadati</taxon>
        <taxon>Pseudomonadota</taxon>
        <taxon>Gammaproteobacteria</taxon>
        <taxon>Chromatiales</taxon>
        <taxon>Ectothiorhodospiraceae</taxon>
        <taxon>Halorhodospira</taxon>
    </lineage>
</organism>
<accession>A1WXZ3</accession>
<keyword id="KW-0004">4Fe-4S</keyword>
<keyword id="KW-0963">Cytoplasm</keyword>
<keyword id="KW-1015">Disulfide bond</keyword>
<keyword id="KW-0408">Iron</keyword>
<keyword id="KW-0411">Iron-sulfur</keyword>
<keyword id="KW-0479">Metal-binding</keyword>
<keyword id="KW-0489">Methyltransferase</keyword>
<keyword id="KW-1185">Reference proteome</keyword>
<keyword id="KW-0698">rRNA processing</keyword>
<keyword id="KW-0949">S-adenosyl-L-methionine</keyword>
<keyword id="KW-0808">Transferase</keyword>
<keyword id="KW-0819">tRNA processing</keyword>
<name>RLMN_HALHL</name>
<proteinExistence type="inferred from homology"/>
<dbReference type="EC" id="2.1.1.192" evidence="1"/>
<dbReference type="EMBL" id="CP000544">
    <property type="protein sequence ID" value="ABM62555.1"/>
    <property type="molecule type" value="Genomic_DNA"/>
</dbReference>
<dbReference type="SMR" id="A1WXZ3"/>
<dbReference type="STRING" id="349124.Hhal_1791"/>
<dbReference type="KEGG" id="hha:Hhal_1791"/>
<dbReference type="eggNOG" id="COG0820">
    <property type="taxonomic scope" value="Bacteria"/>
</dbReference>
<dbReference type="HOGENOM" id="CLU_029101_0_0_6"/>
<dbReference type="OrthoDB" id="9793973at2"/>
<dbReference type="Proteomes" id="UP000000647">
    <property type="component" value="Chromosome"/>
</dbReference>
<dbReference type="GO" id="GO:0005737">
    <property type="term" value="C:cytoplasm"/>
    <property type="evidence" value="ECO:0007669"/>
    <property type="project" value="UniProtKB-SubCell"/>
</dbReference>
<dbReference type="GO" id="GO:0051539">
    <property type="term" value="F:4 iron, 4 sulfur cluster binding"/>
    <property type="evidence" value="ECO:0007669"/>
    <property type="project" value="UniProtKB-UniRule"/>
</dbReference>
<dbReference type="GO" id="GO:0046872">
    <property type="term" value="F:metal ion binding"/>
    <property type="evidence" value="ECO:0007669"/>
    <property type="project" value="UniProtKB-KW"/>
</dbReference>
<dbReference type="GO" id="GO:0070040">
    <property type="term" value="F:rRNA (adenine(2503)-C2-)-methyltransferase activity"/>
    <property type="evidence" value="ECO:0007669"/>
    <property type="project" value="UniProtKB-UniRule"/>
</dbReference>
<dbReference type="GO" id="GO:0019843">
    <property type="term" value="F:rRNA binding"/>
    <property type="evidence" value="ECO:0007669"/>
    <property type="project" value="UniProtKB-UniRule"/>
</dbReference>
<dbReference type="GO" id="GO:0002935">
    <property type="term" value="F:tRNA (adenine(37)-C2)-methyltransferase activity"/>
    <property type="evidence" value="ECO:0007669"/>
    <property type="project" value="UniProtKB-UniRule"/>
</dbReference>
<dbReference type="GO" id="GO:0000049">
    <property type="term" value="F:tRNA binding"/>
    <property type="evidence" value="ECO:0007669"/>
    <property type="project" value="UniProtKB-UniRule"/>
</dbReference>
<dbReference type="GO" id="GO:0070475">
    <property type="term" value="P:rRNA base methylation"/>
    <property type="evidence" value="ECO:0007669"/>
    <property type="project" value="UniProtKB-UniRule"/>
</dbReference>
<dbReference type="GO" id="GO:0030488">
    <property type="term" value="P:tRNA methylation"/>
    <property type="evidence" value="ECO:0007669"/>
    <property type="project" value="UniProtKB-UniRule"/>
</dbReference>
<dbReference type="CDD" id="cd01335">
    <property type="entry name" value="Radical_SAM"/>
    <property type="match status" value="1"/>
</dbReference>
<dbReference type="FunFam" id="1.10.150.530:FF:000003">
    <property type="entry name" value="Dual-specificity RNA methyltransferase RlmN"/>
    <property type="match status" value="1"/>
</dbReference>
<dbReference type="FunFam" id="3.20.20.70:FF:000014">
    <property type="entry name" value="Probable dual-specificity RNA methyltransferase RlmN"/>
    <property type="match status" value="1"/>
</dbReference>
<dbReference type="Gene3D" id="1.10.150.530">
    <property type="match status" value="1"/>
</dbReference>
<dbReference type="Gene3D" id="3.20.20.70">
    <property type="entry name" value="Aldolase class I"/>
    <property type="match status" value="1"/>
</dbReference>
<dbReference type="HAMAP" id="MF_01849">
    <property type="entry name" value="RNA_methyltr_RlmN"/>
    <property type="match status" value="1"/>
</dbReference>
<dbReference type="InterPro" id="IPR013785">
    <property type="entry name" value="Aldolase_TIM"/>
</dbReference>
<dbReference type="InterPro" id="IPR040072">
    <property type="entry name" value="Methyltransferase_A"/>
</dbReference>
<dbReference type="InterPro" id="IPR048641">
    <property type="entry name" value="RlmN_N"/>
</dbReference>
<dbReference type="InterPro" id="IPR027492">
    <property type="entry name" value="RNA_MTrfase_RlmN"/>
</dbReference>
<dbReference type="InterPro" id="IPR004383">
    <property type="entry name" value="rRNA_lsu_MTrfase_RlmN/Cfr"/>
</dbReference>
<dbReference type="InterPro" id="IPR007197">
    <property type="entry name" value="rSAM"/>
</dbReference>
<dbReference type="NCBIfam" id="TIGR00048">
    <property type="entry name" value="rRNA_mod_RlmN"/>
    <property type="match status" value="1"/>
</dbReference>
<dbReference type="PANTHER" id="PTHR30544">
    <property type="entry name" value="23S RRNA METHYLTRANSFERASE"/>
    <property type="match status" value="1"/>
</dbReference>
<dbReference type="PANTHER" id="PTHR30544:SF5">
    <property type="entry name" value="RADICAL SAM CORE DOMAIN-CONTAINING PROTEIN"/>
    <property type="match status" value="1"/>
</dbReference>
<dbReference type="Pfam" id="PF04055">
    <property type="entry name" value="Radical_SAM"/>
    <property type="match status" value="1"/>
</dbReference>
<dbReference type="Pfam" id="PF21016">
    <property type="entry name" value="RlmN_N"/>
    <property type="match status" value="1"/>
</dbReference>
<dbReference type="PIRSF" id="PIRSF006004">
    <property type="entry name" value="CHP00048"/>
    <property type="match status" value="1"/>
</dbReference>
<dbReference type="SFLD" id="SFLDF00275">
    <property type="entry name" value="adenosine_C2_methyltransferase"/>
    <property type="match status" value="1"/>
</dbReference>
<dbReference type="SFLD" id="SFLDS00029">
    <property type="entry name" value="Radical_SAM"/>
    <property type="match status" value="1"/>
</dbReference>
<dbReference type="SUPFAM" id="SSF102114">
    <property type="entry name" value="Radical SAM enzymes"/>
    <property type="match status" value="1"/>
</dbReference>
<dbReference type="PROSITE" id="PS51918">
    <property type="entry name" value="RADICAL_SAM"/>
    <property type="match status" value="1"/>
</dbReference>
<gene>
    <name evidence="1" type="primary">rlmN</name>
    <name type="ordered locus">Hhal_1791</name>
</gene>
<protein>
    <recommendedName>
        <fullName evidence="1">Dual-specificity RNA methyltransferase RlmN</fullName>
        <ecNumber evidence="1">2.1.1.192</ecNumber>
    </recommendedName>
    <alternativeName>
        <fullName evidence="1">23S rRNA (adenine(2503)-C(2))-methyltransferase</fullName>
    </alternativeName>
    <alternativeName>
        <fullName evidence="1">23S rRNA m2A2503 methyltransferase</fullName>
    </alternativeName>
    <alternativeName>
        <fullName evidence="1">Ribosomal RNA large subunit methyltransferase N</fullName>
    </alternativeName>
    <alternativeName>
        <fullName evidence="1">tRNA (adenine(37)-C(2))-methyltransferase</fullName>
    </alternativeName>
    <alternativeName>
        <fullName evidence="1">tRNA m2A37 methyltransferase</fullName>
    </alternativeName>
</protein>
<feature type="chain" id="PRO_0000350207" description="Dual-specificity RNA methyltransferase RlmN">
    <location>
        <begin position="1"/>
        <end position="359"/>
    </location>
</feature>
<feature type="domain" description="Radical SAM core" evidence="2">
    <location>
        <begin position="104"/>
        <end position="329"/>
    </location>
</feature>
<feature type="active site" description="Proton acceptor" evidence="1">
    <location>
        <position position="98"/>
    </location>
</feature>
<feature type="active site" description="S-methylcysteine intermediate" evidence="1">
    <location>
        <position position="340"/>
    </location>
</feature>
<feature type="binding site" evidence="1">
    <location>
        <position position="118"/>
    </location>
    <ligand>
        <name>[4Fe-4S] cluster</name>
        <dbReference type="ChEBI" id="CHEBI:49883"/>
        <note>4Fe-4S-S-AdoMet</note>
    </ligand>
</feature>
<feature type="binding site" evidence="1">
    <location>
        <position position="122"/>
    </location>
    <ligand>
        <name>[4Fe-4S] cluster</name>
        <dbReference type="ChEBI" id="CHEBI:49883"/>
        <note>4Fe-4S-S-AdoMet</note>
    </ligand>
</feature>
<feature type="binding site" evidence="1">
    <location>
        <position position="125"/>
    </location>
    <ligand>
        <name>[4Fe-4S] cluster</name>
        <dbReference type="ChEBI" id="CHEBI:49883"/>
        <note>4Fe-4S-S-AdoMet</note>
    </ligand>
</feature>
<feature type="binding site" evidence="1">
    <location>
        <begin position="166"/>
        <end position="167"/>
    </location>
    <ligand>
        <name>S-adenosyl-L-methionine</name>
        <dbReference type="ChEBI" id="CHEBI:59789"/>
    </ligand>
</feature>
<feature type="binding site" evidence="1">
    <location>
        <position position="198"/>
    </location>
    <ligand>
        <name>S-adenosyl-L-methionine</name>
        <dbReference type="ChEBI" id="CHEBI:59789"/>
    </ligand>
</feature>
<feature type="binding site" evidence="1">
    <location>
        <begin position="220"/>
        <end position="222"/>
    </location>
    <ligand>
        <name>S-adenosyl-L-methionine</name>
        <dbReference type="ChEBI" id="CHEBI:59789"/>
    </ligand>
</feature>
<feature type="binding site" evidence="1">
    <location>
        <position position="297"/>
    </location>
    <ligand>
        <name>S-adenosyl-L-methionine</name>
        <dbReference type="ChEBI" id="CHEBI:59789"/>
    </ligand>
</feature>
<feature type="disulfide bond" description="(transient)" evidence="1">
    <location>
        <begin position="111"/>
        <end position="340"/>
    </location>
</feature>
<evidence type="ECO:0000255" key="1">
    <source>
        <dbReference type="HAMAP-Rule" id="MF_01849"/>
    </source>
</evidence>
<evidence type="ECO:0000255" key="2">
    <source>
        <dbReference type="PROSITE-ProRule" id="PRU01266"/>
    </source>
</evidence>